<dbReference type="EMBL" id="FJ411285">
    <property type="protein sequence ID" value="ACR83846.1"/>
    <property type="molecule type" value="mRNA"/>
</dbReference>
<dbReference type="SMR" id="E3P6P0"/>
<dbReference type="GO" id="GO:0070062">
    <property type="term" value="C:extracellular exosome"/>
    <property type="evidence" value="ECO:0007669"/>
    <property type="project" value="TreeGrafter"/>
</dbReference>
<dbReference type="GO" id="GO:0004869">
    <property type="term" value="F:cysteine-type endopeptidase inhibitor activity"/>
    <property type="evidence" value="ECO:0007669"/>
    <property type="project" value="UniProtKB-KW"/>
</dbReference>
<dbReference type="CDD" id="cd00042">
    <property type="entry name" value="CY"/>
    <property type="match status" value="1"/>
</dbReference>
<dbReference type="FunFam" id="3.10.450.10:FF:000004">
    <property type="entry name" value="Cystatin C"/>
    <property type="match status" value="1"/>
</dbReference>
<dbReference type="Gene3D" id="3.10.450.10">
    <property type="match status" value="1"/>
</dbReference>
<dbReference type="InterPro" id="IPR000010">
    <property type="entry name" value="Cystatin_dom"/>
</dbReference>
<dbReference type="InterPro" id="IPR046350">
    <property type="entry name" value="Cystatin_sf"/>
</dbReference>
<dbReference type="PANTHER" id="PTHR47033">
    <property type="entry name" value="CYSTATIN-M"/>
    <property type="match status" value="1"/>
</dbReference>
<dbReference type="PANTHER" id="PTHR47033:SF1">
    <property type="entry name" value="CYSTATIN-M"/>
    <property type="match status" value="1"/>
</dbReference>
<dbReference type="Pfam" id="PF00031">
    <property type="entry name" value="Cystatin"/>
    <property type="match status" value="1"/>
</dbReference>
<dbReference type="SMART" id="SM00043">
    <property type="entry name" value="CY"/>
    <property type="match status" value="1"/>
</dbReference>
<dbReference type="SUPFAM" id="SSF54403">
    <property type="entry name" value="Cystatin/monellin"/>
    <property type="match status" value="1"/>
</dbReference>
<accession>E3P6P0</accession>
<feature type="signal peptide" evidence="1">
    <location>
        <begin position="1"/>
        <end position="26"/>
    </location>
</feature>
<feature type="chain" id="PRO_5000654423" description="Cystatin">
    <location>
        <begin position="27"/>
        <end position="141"/>
    </location>
</feature>
<feature type="domain" description="Cystatin">
    <location>
        <begin position="29"/>
        <end position="129"/>
    </location>
</feature>
<feature type="short sequence motif" description="Secondary area of contact" evidence="1">
    <location>
        <begin position="73"/>
        <end position="77"/>
    </location>
</feature>
<feature type="site" description="Reactive site" evidence="1">
    <location>
        <position position="29"/>
    </location>
</feature>
<feature type="disulfide bond" evidence="1">
    <location>
        <begin position="91"/>
        <end position="107"/>
    </location>
</feature>
<feature type="disulfide bond" evidence="1">
    <location>
        <begin position="120"/>
        <end position="140"/>
    </location>
</feature>
<comment type="function">
    <text evidence="1">Inhibits various C1 cysteine proteases including cathepsin L, papain and cathepsin B. This protein has no toxic activity and its function in the venom is unknown. It may play a role as a housekeeping or regulatory protein (By similarity).</text>
</comment>
<comment type="subcellular location">
    <subcellularLocation>
        <location>Secreted</location>
    </subcellularLocation>
</comment>
<comment type="tissue specificity">
    <text evidence="3">Expressed at a low level by the venom gland (at protein level).</text>
</comment>
<comment type="miscellaneous">
    <text evidence="1">Negative results: the recombinant protein does not inhibit calpain-1 (CAPN1), a C2 family cysteine protease and legumain (LGMN), a C13 family cysteine protease. Does not provoke cell death (PC3 prostrate cancer cells) (By similarity).</text>
</comment>
<comment type="similarity">
    <text evidence="2">Belongs to the cystatin family.</text>
</comment>
<reference key="1">
    <citation type="journal article" date="2011" name="Biochimie">
        <title>Cloning and characterisation of novel cystatins from elapid snake venom glands.</title>
        <authorList>
            <person name="Richards R."/>
            <person name="St Pierre L."/>
            <person name="Trabi M."/>
            <person name="Johnson L.A."/>
            <person name="de Jersey J."/>
            <person name="Masci P.P."/>
            <person name="Lavin M.F."/>
        </authorList>
    </citation>
    <scope>NUCLEOTIDE SEQUENCE [MRNA]</scope>
    <scope>LEVEL OF PROTEIN EXPRESSION</scope>
    <source>
        <tissue>Venom</tissue>
        <tissue>Venom gland</tissue>
    </source>
</reference>
<sequence>MLHSQLPVAAPLRLLCALLLLPSVTMIPGGLSPRSVTDPDVQEAAEFAVQEYNALSANAYYYKQLRIVEAQSQVVTGAKYYLTMELMKTKCAKTTGKPKVYKEIQNCELPPKAQQEKLTCRFQVWSRPWLEKIELTKMSCN</sequence>
<organism>
    <name type="scientific">Hoplocephalus stephensii</name>
    <name type="common">Stephens's banded snake</name>
    <dbReference type="NCBI Taxonomy" id="196418"/>
    <lineage>
        <taxon>Eukaryota</taxon>
        <taxon>Metazoa</taxon>
        <taxon>Chordata</taxon>
        <taxon>Craniata</taxon>
        <taxon>Vertebrata</taxon>
        <taxon>Euteleostomi</taxon>
        <taxon>Lepidosauria</taxon>
        <taxon>Squamata</taxon>
        <taxon>Bifurcata</taxon>
        <taxon>Unidentata</taxon>
        <taxon>Episquamata</taxon>
        <taxon>Toxicofera</taxon>
        <taxon>Serpentes</taxon>
        <taxon>Colubroidea</taxon>
        <taxon>Elapidae</taxon>
        <taxon>Notechinae</taxon>
        <taxon>Hoplocephalus</taxon>
    </lineage>
</organism>
<proteinExistence type="evidence at protein level"/>
<protein>
    <recommendedName>
        <fullName>Cystatin</fullName>
    </recommendedName>
</protein>
<evidence type="ECO:0000250" key="1"/>
<evidence type="ECO:0000305" key="2"/>
<evidence type="ECO:0000305" key="3">
    <source>
    </source>
</evidence>
<name>CYT_HOPST</name>
<keyword id="KW-1015">Disulfide bond</keyword>
<keyword id="KW-0646">Protease inhibitor</keyword>
<keyword id="KW-0964">Secreted</keyword>
<keyword id="KW-0732">Signal</keyword>
<keyword id="KW-0789">Thiol protease inhibitor</keyword>